<sequence>MGNIKTLLENRFKKPTPDKMESLAKKRLEGELSPFLNGFTNPKLSSQEEARFRQLLEEYSFSKEISHNDLQQLCHLSAQVKQIHHQAILLHGERIKKVRELLKTYREGVFSAWLLLTYGNRQTPYNFLVYYELFSALPDTLKLELERLPRQAVYTLASREGSQEKKEEIIRNYQGETRGELLEIIRREFPLLPTDRRQSSLAQQAFSFFAKGTKLLQRCTDISQEELLSLEKLIKKLQKVTTNLLSNTKVSLNDDETQNSRNR</sequence>
<gene>
    <name type="ordered locus">CT_583</name>
</gene>
<comment type="similarity">
    <text evidence="1">Belongs to the UPF0137 (pGP6-D) family.</text>
</comment>
<keyword id="KW-1185">Reference proteome</keyword>
<accession>O84587</accession>
<protein>
    <recommendedName>
        <fullName>Virulence plasmid protein pGP6-D-related protein</fullName>
    </recommendedName>
</protein>
<organism>
    <name type="scientific">Chlamydia trachomatis serovar D (strain ATCC VR-885 / DSM 19411 / UW-3/Cx)</name>
    <dbReference type="NCBI Taxonomy" id="272561"/>
    <lineage>
        <taxon>Bacteria</taxon>
        <taxon>Pseudomonadati</taxon>
        <taxon>Chlamydiota</taxon>
        <taxon>Chlamydiia</taxon>
        <taxon>Chlamydiales</taxon>
        <taxon>Chlamydiaceae</taxon>
        <taxon>Chlamydia/Chlamydophila group</taxon>
        <taxon>Chlamydia</taxon>
    </lineage>
</organism>
<proteinExistence type="inferred from homology"/>
<reference key="1">
    <citation type="journal article" date="1998" name="Science">
        <title>Genome sequence of an obligate intracellular pathogen of humans: Chlamydia trachomatis.</title>
        <authorList>
            <person name="Stephens R.S."/>
            <person name="Kalman S."/>
            <person name="Lammel C.J."/>
            <person name="Fan J."/>
            <person name="Marathe R."/>
            <person name="Aravind L."/>
            <person name="Mitchell W.P."/>
            <person name="Olinger L."/>
            <person name="Tatusov R.L."/>
            <person name="Zhao Q."/>
            <person name="Koonin E.V."/>
            <person name="Davis R.W."/>
        </authorList>
    </citation>
    <scope>NUCLEOTIDE SEQUENCE [LARGE SCALE GENOMIC DNA]</scope>
    <source>
        <strain>ATCC VR-885 / DSM 19411 / UW-3/Cx</strain>
    </source>
</reference>
<evidence type="ECO:0000305" key="1"/>
<feature type="chain" id="PRO_0000220779" description="Virulence plasmid protein pGP6-D-related protein">
    <location>
        <begin position="1"/>
        <end position="263"/>
    </location>
</feature>
<name>GP6R_CHLTR</name>
<dbReference type="EMBL" id="AE001273">
    <property type="protein sequence ID" value="AAC68185.1"/>
    <property type="molecule type" value="Genomic_DNA"/>
</dbReference>
<dbReference type="PIR" id="H71495">
    <property type="entry name" value="H71495"/>
</dbReference>
<dbReference type="RefSeq" id="WP_010725259.1">
    <property type="nucleotide sequence ID" value="NC_000117.1"/>
</dbReference>
<dbReference type="STRING" id="272561.CT_583"/>
<dbReference type="EnsemblBacteria" id="AAC68185">
    <property type="protein sequence ID" value="AAC68185"/>
    <property type="gene ID" value="CT_583"/>
</dbReference>
<dbReference type="KEGG" id="ctr:CT_583"/>
<dbReference type="PATRIC" id="fig|272561.5.peg.635"/>
<dbReference type="HOGENOM" id="CLU_1109868_0_0_0"/>
<dbReference type="InParanoid" id="O84587"/>
<dbReference type="OrthoDB" id="20802at2"/>
<dbReference type="Proteomes" id="UP000000431">
    <property type="component" value="Chromosome"/>
</dbReference>
<dbReference type="InterPro" id="IPR005350">
    <property type="entry name" value="UPF0137"/>
</dbReference>
<dbReference type="Pfam" id="PF03677">
    <property type="entry name" value="UPF0137"/>
    <property type="match status" value="1"/>
</dbReference>